<sequence>MKTLFVLFILILCVFAINANQQEEINQESTQQTHQNLLYKVQKWRTSLKDSSDAELKLSPALVVAGVLCFTAALISSASGIGDGFFFIPIMNLVAGIDLKAASSFSAFMVTGGSIANLINNHFGCKKLIDYDLALLLEPCMLLGVSVGVICNKVFPEWLITGLFVVFLMWSSMETCENGHTSWKLSLILREKEDMRDSRLAEVKRRRTIIFFKHLYLKIKKTETKQSFLGRNLGIISIKPCSVEYWILLSLQIPLALVFTILALSRTESLQEQSISNQEGTRLDHQFKRLMFPVMSFLAGLLGGIFGIGGGMIISPLLLRAGIPPQVTAATTSFMVFFSATMSGVQYLLLGMQNTEAAYVFSVICFFASTLGLVFAQKVVPHFRRASIIVFLVGTMMYLTTIVMASFGILVFYIDNDAGKDIGFQLPC</sequence>
<protein>
    <recommendedName>
        <fullName evidence="4">Sulfite exporter TauE/SafE family protein 6</fullName>
    </recommendedName>
</protein>
<keyword id="KW-0472">Membrane</keyword>
<keyword id="KW-1185">Reference proteome</keyword>
<keyword id="KW-0812">Transmembrane</keyword>
<keyword id="KW-1133">Transmembrane helix</keyword>
<keyword id="KW-0813">Transport</keyword>
<reference key="1">
    <citation type="journal article" date="1999" name="Nature">
        <title>Sequence and analysis of chromosome 4 of the plant Arabidopsis thaliana.</title>
        <authorList>
            <person name="Mayer K.F.X."/>
            <person name="Schueller C."/>
            <person name="Wambutt R."/>
            <person name="Murphy G."/>
            <person name="Volckaert G."/>
            <person name="Pohl T."/>
            <person name="Duesterhoeft A."/>
            <person name="Stiekema W."/>
            <person name="Entian K.-D."/>
            <person name="Terryn N."/>
            <person name="Harris B."/>
            <person name="Ansorge W."/>
            <person name="Brandt P."/>
            <person name="Grivell L.A."/>
            <person name="Rieger M."/>
            <person name="Weichselgartner M."/>
            <person name="de Simone V."/>
            <person name="Obermaier B."/>
            <person name="Mache R."/>
            <person name="Mueller M."/>
            <person name="Kreis M."/>
            <person name="Delseny M."/>
            <person name="Puigdomenech P."/>
            <person name="Watson M."/>
            <person name="Schmidtheini T."/>
            <person name="Reichert B."/>
            <person name="Portetelle D."/>
            <person name="Perez-Alonso M."/>
            <person name="Boutry M."/>
            <person name="Bancroft I."/>
            <person name="Vos P."/>
            <person name="Hoheisel J."/>
            <person name="Zimmermann W."/>
            <person name="Wedler H."/>
            <person name="Ridley P."/>
            <person name="Langham S.-A."/>
            <person name="McCullagh B."/>
            <person name="Bilham L."/>
            <person name="Robben J."/>
            <person name="van der Schueren J."/>
            <person name="Grymonprez B."/>
            <person name="Chuang Y.-J."/>
            <person name="Vandenbussche F."/>
            <person name="Braeken M."/>
            <person name="Weltjens I."/>
            <person name="Voet M."/>
            <person name="Bastiaens I."/>
            <person name="Aert R."/>
            <person name="Defoor E."/>
            <person name="Weitzenegger T."/>
            <person name="Bothe G."/>
            <person name="Ramsperger U."/>
            <person name="Hilbert H."/>
            <person name="Braun M."/>
            <person name="Holzer E."/>
            <person name="Brandt A."/>
            <person name="Peters S."/>
            <person name="van Staveren M."/>
            <person name="Dirkse W."/>
            <person name="Mooijman P."/>
            <person name="Klein Lankhorst R."/>
            <person name="Rose M."/>
            <person name="Hauf J."/>
            <person name="Koetter P."/>
            <person name="Berneiser S."/>
            <person name="Hempel S."/>
            <person name="Feldpausch M."/>
            <person name="Lamberth S."/>
            <person name="Van den Daele H."/>
            <person name="De Keyser A."/>
            <person name="Buysshaert C."/>
            <person name="Gielen J."/>
            <person name="Villarroel R."/>
            <person name="De Clercq R."/>
            <person name="van Montagu M."/>
            <person name="Rogers J."/>
            <person name="Cronin A."/>
            <person name="Quail M.A."/>
            <person name="Bray-Allen S."/>
            <person name="Clark L."/>
            <person name="Doggett J."/>
            <person name="Hall S."/>
            <person name="Kay M."/>
            <person name="Lennard N."/>
            <person name="McLay K."/>
            <person name="Mayes R."/>
            <person name="Pettett A."/>
            <person name="Rajandream M.A."/>
            <person name="Lyne M."/>
            <person name="Benes V."/>
            <person name="Rechmann S."/>
            <person name="Borkova D."/>
            <person name="Bloecker H."/>
            <person name="Scharfe M."/>
            <person name="Grimm M."/>
            <person name="Loehnert T.-H."/>
            <person name="Dose S."/>
            <person name="de Haan M."/>
            <person name="Maarse A.C."/>
            <person name="Schaefer M."/>
            <person name="Mueller-Auer S."/>
            <person name="Gabel C."/>
            <person name="Fuchs M."/>
            <person name="Fartmann B."/>
            <person name="Granderath K."/>
            <person name="Dauner D."/>
            <person name="Herzl A."/>
            <person name="Neumann S."/>
            <person name="Argiriou A."/>
            <person name="Vitale D."/>
            <person name="Liguori R."/>
            <person name="Piravandi E."/>
            <person name="Massenet O."/>
            <person name="Quigley F."/>
            <person name="Clabauld G."/>
            <person name="Muendlein A."/>
            <person name="Felber R."/>
            <person name="Schnabl S."/>
            <person name="Hiller R."/>
            <person name="Schmidt W."/>
            <person name="Lecharny A."/>
            <person name="Aubourg S."/>
            <person name="Chefdor F."/>
            <person name="Cooke R."/>
            <person name="Berger C."/>
            <person name="Monfort A."/>
            <person name="Casacuberta E."/>
            <person name="Gibbons T."/>
            <person name="Weber N."/>
            <person name="Vandenbol M."/>
            <person name="Bargues M."/>
            <person name="Terol J."/>
            <person name="Torres A."/>
            <person name="Perez-Perez A."/>
            <person name="Purnelle B."/>
            <person name="Bent E."/>
            <person name="Johnson S."/>
            <person name="Tacon D."/>
            <person name="Jesse T."/>
            <person name="Heijnen L."/>
            <person name="Schwarz S."/>
            <person name="Scholler P."/>
            <person name="Heber S."/>
            <person name="Francs P."/>
            <person name="Bielke C."/>
            <person name="Frishman D."/>
            <person name="Haase D."/>
            <person name="Lemcke K."/>
            <person name="Mewes H.-W."/>
            <person name="Stocker S."/>
            <person name="Zaccaria P."/>
            <person name="Bevan M."/>
            <person name="Wilson R.K."/>
            <person name="de la Bastide M."/>
            <person name="Habermann K."/>
            <person name="Parnell L."/>
            <person name="Dedhia N."/>
            <person name="Gnoj L."/>
            <person name="Schutz K."/>
            <person name="Huang E."/>
            <person name="Spiegel L."/>
            <person name="Sekhon M."/>
            <person name="Murray J."/>
            <person name="Sheet P."/>
            <person name="Cordes M."/>
            <person name="Abu-Threideh J."/>
            <person name="Stoneking T."/>
            <person name="Kalicki J."/>
            <person name="Graves T."/>
            <person name="Harmon G."/>
            <person name="Edwards J."/>
            <person name="Latreille P."/>
            <person name="Courtney L."/>
            <person name="Cloud J."/>
            <person name="Abbott A."/>
            <person name="Scott K."/>
            <person name="Johnson D."/>
            <person name="Minx P."/>
            <person name="Bentley D."/>
            <person name="Fulton B."/>
            <person name="Miller N."/>
            <person name="Greco T."/>
            <person name="Kemp K."/>
            <person name="Kramer J."/>
            <person name="Fulton L."/>
            <person name="Mardis E."/>
            <person name="Dante M."/>
            <person name="Pepin K."/>
            <person name="Hillier L.W."/>
            <person name="Nelson J."/>
            <person name="Spieth J."/>
            <person name="Ryan E."/>
            <person name="Andrews S."/>
            <person name="Geisel C."/>
            <person name="Layman D."/>
            <person name="Du H."/>
            <person name="Ali J."/>
            <person name="Berghoff A."/>
            <person name="Jones K."/>
            <person name="Drone K."/>
            <person name="Cotton M."/>
            <person name="Joshu C."/>
            <person name="Antonoiu B."/>
            <person name="Zidanic M."/>
            <person name="Strong C."/>
            <person name="Sun H."/>
            <person name="Lamar B."/>
            <person name="Yordan C."/>
            <person name="Ma P."/>
            <person name="Zhong J."/>
            <person name="Preston R."/>
            <person name="Vil D."/>
            <person name="Shekher M."/>
            <person name="Matero A."/>
            <person name="Shah R."/>
            <person name="Swaby I.K."/>
            <person name="O'Shaughnessy A."/>
            <person name="Rodriguez M."/>
            <person name="Hoffman J."/>
            <person name="Till S."/>
            <person name="Granat S."/>
            <person name="Shohdy N."/>
            <person name="Hasegawa A."/>
            <person name="Hameed A."/>
            <person name="Lodhi M."/>
            <person name="Johnson A."/>
            <person name="Chen E."/>
            <person name="Marra M.A."/>
            <person name="Martienssen R."/>
            <person name="McCombie W.R."/>
        </authorList>
    </citation>
    <scope>NUCLEOTIDE SEQUENCE [LARGE SCALE GENOMIC DNA]</scope>
    <source>
        <strain>cv. Columbia</strain>
    </source>
</reference>
<reference key="2">
    <citation type="journal article" date="2017" name="Plant J.">
        <title>Araport11: a complete reannotation of the Arabidopsis thaliana reference genome.</title>
        <authorList>
            <person name="Cheng C.Y."/>
            <person name="Krishnakumar V."/>
            <person name="Chan A.P."/>
            <person name="Thibaud-Nissen F."/>
            <person name="Schobel S."/>
            <person name="Town C.D."/>
        </authorList>
    </citation>
    <scope>GENOME REANNOTATION</scope>
    <source>
        <strain>cv. Columbia</strain>
    </source>
</reference>
<gene>
    <name evidence="3" type="ordered locus">At4g21260</name>
    <name evidence="5" type="ORF">F7J7.200</name>
</gene>
<dbReference type="EMBL" id="AL021960">
    <property type="protein sequence ID" value="CAA17545.1"/>
    <property type="status" value="ALT_SEQ"/>
    <property type="molecule type" value="Genomic_DNA"/>
</dbReference>
<dbReference type="EMBL" id="AL161554">
    <property type="protein sequence ID" value="CAB79126.1"/>
    <property type="status" value="ALT_SEQ"/>
    <property type="molecule type" value="Genomic_DNA"/>
</dbReference>
<dbReference type="EMBL" id="CP002687">
    <property type="protein sequence ID" value="AEE84433.1"/>
    <property type="status" value="ALT_SEQ"/>
    <property type="molecule type" value="Genomic_DNA"/>
</dbReference>
<dbReference type="PIR" id="T04957">
    <property type="entry name" value="T04957"/>
</dbReference>
<dbReference type="RefSeq" id="NP_193858.1">
    <property type="nucleotide sequence ID" value="NM_118245.1"/>
</dbReference>
<dbReference type="STRING" id="3702.O49567"/>
<dbReference type="PaxDb" id="3702-AT4G21260.1"/>
<dbReference type="ProteomicsDB" id="234191"/>
<dbReference type="GeneID" id="827875"/>
<dbReference type="KEGG" id="ath:AT4G21260"/>
<dbReference type="Araport" id="AT4G21260"/>
<dbReference type="TAIR" id="AT4G21260"/>
<dbReference type="eggNOG" id="ENOG502QUAQ">
    <property type="taxonomic scope" value="Eukaryota"/>
</dbReference>
<dbReference type="HOGENOM" id="CLU_029011_2_1_1"/>
<dbReference type="InParanoid" id="O49567"/>
<dbReference type="PhylomeDB" id="O49567"/>
<dbReference type="PRO" id="PR:O49567"/>
<dbReference type="Proteomes" id="UP000006548">
    <property type="component" value="Chromosome 4"/>
</dbReference>
<dbReference type="ExpressionAtlas" id="O49567">
    <property type="expression patterns" value="baseline and differential"/>
</dbReference>
<dbReference type="GO" id="GO:0031464">
    <property type="term" value="C:Cul4A-RING E3 ubiquitin ligase complex"/>
    <property type="evidence" value="ECO:0000318"/>
    <property type="project" value="GO_Central"/>
</dbReference>
<dbReference type="GO" id="GO:0016020">
    <property type="term" value="C:membrane"/>
    <property type="evidence" value="ECO:0007669"/>
    <property type="project" value="UniProtKB-SubCell"/>
</dbReference>
<dbReference type="GO" id="GO:0016567">
    <property type="term" value="P:protein ubiquitination"/>
    <property type="evidence" value="ECO:0000318"/>
    <property type="project" value="GO_Central"/>
</dbReference>
<dbReference type="InterPro" id="IPR002781">
    <property type="entry name" value="TM_pro_TauE-like"/>
</dbReference>
<dbReference type="PANTHER" id="PTHR14255">
    <property type="entry name" value="CEREBLON"/>
    <property type="match status" value="1"/>
</dbReference>
<dbReference type="PANTHER" id="PTHR14255:SF3">
    <property type="entry name" value="SULFITE EXPORTER TAUE_SAFE FAMILY PROTEIN 5-RELATED"/>
    <property type="match status" value="1"/>
</dbReference>
<dbReference type="Pfam" id="PF01925">
    <property type="entry name" value="TauE"/>
    <property type="match status" value="2"/>
</dbReference>
<evidence type="ECO:0000255" key="1"/>
<evidence type="ECO:0000305" key="2"/>
<evidence type="ECO:0000312" key="3">
    <source>
        <dbReference type="Araport" id="AT4G21260"/>
    </source>
</evidence>
<evidence type="ECO:0000312" key="4">
    <source>
        <dbReference type="EMBL" id="AEE84433.1"/>
    </source>
</evidence>
<evidence type="ECO:0000312" key="5">
    <source>
        <dbReference type="EMBL" id="CAA17545.1"/>
    </source>
</evidence>
<feature type="chain" id="PRO_5009340897" description="Sulfite exporter TauE/SafE family protein 6" evidence="1">
    <location>
        <begin position="1"/>
        <end position="428"/>
    </location>
</feature>
<feature type="transmembrane region" description="Helical" evidence="1">
    <location>
        <begin position="1"/>
        <end position="21"/>
    </location>
</feature>
<feature type="transmembrane region" description="Helical" evidence="1">
    <location>
        <begin position="61"/>
        <end position="81"/>
    </location>
</feature>
<feature type="transmembrane region" description="Helical" evidence="1">
    <location>
        <begin position="82"/>
        <end position="102"/>
    </location>
</feature>
<feature type="transmembrane region" description="Helical" evidence="1">
    <location>
        <begin position="105"/>
        <end position="125"/>
    </location>
</feature>
<feature type="transmembrane region" description="Helical" evidence="1">
    <location>
        <begin position="128"/>
        <end position="148"/>
    </location>
</feature>
<feature type="transmembrane region" description="Helical" evidence="1">
    <location>
        <begin position="149"/>
        <end position="169"/>
    </location>
</feature>
<feature type="transmembrane region" description="Helical" evidence="1">
    <location>
        <begin position="245"/>
        <end position="265"/>
    </location>
</feature>
<feature type="transmembrane region" description="Helical" evidence="1">
    <location>
        <begin position="294"/>
        <end position="314"/>
    </location>
</feature>
<feature type="transmembrane region" description="Helical" evidence="1">
    <location>
        <begin position="332"/>
        <end position="352"/>
    </location>
</feature>
<feature type="transmembrane region" description="Helical" evidence="1">
    <location>
        <begin position="356"/>
        <end position="376"/>
    </location>
</feature>
<feature type="transmembrane region" description="Helical" evidence="1">
    <location>
        <begin position="388"/>
        <end position="408"/>
    </location>
</feature>
<accession>O49567</accession>
<name>TAUE6_ARATH</name>
<proteinExistence type="inferred from homology"/>
<organism>
    <name type="scientific">Arabidopsis thaliana</name>
    <name type="common">Mouse-ear cress</name>
    <dbReference type="NCBI Taxonomy" id="3702"/>
    <lineage>
        <taxon>Eukaryota</taxon>
        <taxon>Viridiplantae</taxon>
        <taxon>Streptophyta</taxon>
        <taxon>Embryophyta</taxon>
        <taxon>Tracheophyta</taxon>
        <taxon>Spermatophyta</taxon>
        <taxon>Magnoliopsida</taxon>
        <taxon>eudicotyledons</taxon>
        <taxon>Gunneridae</taxon>
        <taxon>Pentapetalae</taxon>
        <taxon>rosids</taxon>
        <taxon>malvids</taxon>
        <taxon>Brassicales</taxon>
        <taxon>Brassicaceae</taxon>
        <taxon>Camelineae</taxon>
        <taxon>Arabidopsis</taxon>
    </lineage>
</organism>
<comment type="subcellular location">
    <subcellularLocation>
        <location evidence="1">Membrane</location>
        <topology evidence="1">Multi-pass membrane protein</topology>
    </subcellularLocation>
</comment>
<comment type="similarity">
    <text evidence="2">Belongs to the 4-toluene sulfonate uptake permease (TSUP) (TC 2.A.102) family.</text>
</comment>
<comment type="sequence caution" evidence="2">
    <conflict type="erroneous gene model prediction">
        <sequence resource="EMBL-CDS" id="AEE84433"/>
    </conflict>
</comment>
<comment type="sequence caution" evidence="2">
    <conflict type="erroneous gene model prediction">
        <sequence resource="EMBL-CDS" id="CAA17545"/>
    </conflict>
</comment>
<comment type="sequence caution" evidence="2">
    <conflict type="erroneous gene model prediction">
        <sequence resource="EMBL-CDS" id="CAB79126"/>
    </conflict>
</comment>